<protein>
    <recommendedName>
        <fullName evidence="10">Cartilage oligomeric matrix protein</fullName>
        <shortName>COMP</shortName>
    </recommendedName>
</protein>
<dbReference type="EMBL" id="X72914">
    <property type="protein sequence ID" value="CAA51419.1"/>
    <property type="molecule type" value="mRNA"/>
</dbReference>
<dbReference type="PIR" id="A44315">
    <property type="entry name" value="A44315"/>
</dbReference>
<dbReference type="RefSeq" id="NP_036966.1">
    <property type="nucleotide sequence ID" value="NM_012834.1"/>
</dbReference>
<dbReference type="PDB" id="1FBM">
    <property type="method" value="X-ray"/>
    <property type="resolution" value="2.70 A"/>
    <property type="chains" value="A/B/C/D/E=28-72"/>
</dbReference>
<dbReference type="PDB" id="1VDF">
    <property type="method" value="X-ray"/>
    <property type="resolution" value="2.05 A"/>
    <property type="chains" value="A/B/C/D/E=28-72"/>
</dbReference>
<dbReference type="PDB" id="6SF6">
    <property type="method" value="X-ray"/>
    <property type="resolution" value="1.90 A"/>
    <property type="chains" value="C/D=232-250"/>
</dbReference>
<dbReference type="PDBsum" id="1FBM"/>
<dbReference type="PDBsum" id="1VDF"/>
<dbReference type="PDBsum" id="6SF6"/>
<dbReference type="SMR" id="P35444"/>
<dbReference type="BioGRID" id="247343">
    <property type="interactions" value="2"/>
</dbReference>
<dbReference type="FunCoup" id="P35444">
    <property type="interactions" value="333"/>
</dbReference>
<dbReference type="STRING" id="10116.ENSRNOP00000067037"/>
<dbReference type="GlyCosmos" id="P35444">
    <property type="glycosylation" value="2 sites, No reported glycans"/>
</dbReference>
<dbReference type="GlyGen" id="P35444">
    <property type="glycosylation" value="2 sites"/>
</dbReference>
<dbReference type="PhosphoSitePlus" id="P35444"/>
<dbReference type="PaxDb" id="10116-ENSRNOP00000067037"/>
<dbReference type="ABCD" id="P35444">
    <property type="antibodies" value="1 sequenced antibody"/>
</dbReference>
<dbReference type="GeneID" id="25304"/>
<dbReference type="KEGG" id="rno:25304"/>
<dbReference type="AGR" id="RGD:2378"/>
<dbReference type="CTD" id="1311"/>
<dbReference type="RGD" id="2378">
    <property type="gene designation" value="Comp"/>
</dbReference>
<dbReference type="eggNOG" id="ENOG502QRK8">
    <property type="taxonomic scope" value="Eukaryota"/>
</dbReference>
<dbReference type="InParanoid" id="P35444"/>
<dbReference type="PhylomeDB" id="P35444"/>
<dbReference type="Reactome" id="R-RNO-216083">
    <property type="pathway name" value="Integrin cell surface interactions"/>
</dbReference>
<dbReference type="Reactome" id="R-RNO-3000178">
    <property type="pathway name" value="ECM proteoglycans"/>
</dbReference>
<dbReference type="EvolutionaryTrace" id="P35444"/>
<dbReference type="PRO" id="PR:P35444"/>
<dbReference type="Proteomes" id="UP000002494">
    <property type="component" value="Unplaced"/>
</dbReference>
<dbReference type="GO" id="GO:0062023">
    <property type="term" value="C:collagen-containing extracellular matrix"/>
    <property type="evidence" value="ECO:0000318"/>
    <property type="project" value="GO_Central"/>
</dbReference>
<dbReference type="GO" id="GO:0031012">
    <property type="term" value="C:extracellular matrix"/>
    <property type="evidence" value="ECO:0000266"/>
    <property type="project" value="RGD"/>
</dbReference>
<dbReference type="GO" id="GO:0005576">
    <property type="term" value="C:extracellular region"/>
    <property type="evidence" value="ECO:0000250"/>
    <property type="project" value="UniProtKB"/>
</dbReference>
<dbReference type="GO" id="GO:0005615">
    <property type="term" value="C:extracellular space"/>
    <property type="evidence" value="ECO:0000266"/>
    <property type="project" value="RGD"/>
</dbReference>
<dbReference type="GO" id="GO:0032991">
    <property type="term" value="C:protein-containing complex"/>
    <property type="evidence" value="ECO:0000266"/>
    <property type="project" value="RGD"/>
</dbReference>
<dbReference type="GO" id="GO:0036122">
    <property type="term" value="F:BMP binding"/>
    <property type="evidence" value="ECO:0000266"/>
    <property type="project" value="RGD"/>
</dbReference>
<dbReference type="GO" id="GO:0005509">
    <property type="term" value="F:calcium ion binding"/>
    <property type="evidence" value="ECO:0000266"/>
    <property type="project" value="RGD"/>
</dbReference>
<dbReference type="GO" id="GO:0005518">
    <property type="term" value="F:collagen binding"/>
    <property type="evidence" value="ECO:0000266"/>
    <property type="project" value="RGD"/>
</dbReference>
<dbReference type="GO" id="GO:0005201">
    <property type="term" value="F:extracellular matrix structural constituent"/>
    <property type="evidence" value="ECO:0000314"/>
    <property type="project" value="RGD"/>
</dbReference>
<dbReference type="GO" id="GO:0001968">
    <property type="term" value="F:fibronectin binding"/>
    <property type="evidence" value="ECO:0000314"/>
    <property type="project" value="RGD"/>
</dbReference>
<dbReference type="GO" id="GO:0043395">
    <property type="term" value="F:heparan sulfate proteoglycan binding"/>
    <property type="evidence" value="ECO:0000266"/>
    <property type="project" value="RGD"/>
</dbReference>
<dbReference type="GO" id="GO:0008201">
    <property type="term" value="F:heparin binding"/>
    <property type="evidence" value="ECO:0000266"/>
    <property type="project" value="RGD"/>
</dbReference>
<dbReference type="GO" id="GO:0005178">
    <property type="term" value="F:integrin binding"/>
    <property type="evidence" value="ECO:0000266"/>
    <property type="project" value="RGD"/>
</dbReference>
<dbReference type="GO" id="GO:0002020">
    <property type="term" value="F:protease binding"/>
    <property type="evidence" value="ECO:0000266"/>
    <property type="project" value="RGD"/>
</dbReference>
<dbReference type="GO" id="GO:0043394">
    <property type="term" value="F:proteoglycan binding"/>
    <property type="evidence" value="ECO:0000266"/>
    <property type="project" value="RGD"/>
</dbReference>
<dbReference type="GO" id="GO:0005499">
    <property type="term" value="F:vitamin D binding"/>
    <property type="evidence" value="ECO:0000315"/>
    <property type="project" value="RGD"/>
</dbReference>
<dbReference type="GO" id="GO:0006915">
    <property type="term" value="P:apoptotic process"/>
    <property type="evidence" value="ECO:0000266"/>
    <property type="project" value="RGD"/>
</dbReference>
<dbReference type="GO" id="GO:0048844">
    <property type="term" value="P:artery morphogenesis"/>
    <property type="evidence" value="ECO:0000266"/>
    <property type="project" value="RGD"/>
</dbReference>
<dbReference type="GO" id="GO:0007596">
    <property type="term" value="P:blood coagulation"/>
    <property type="evidence" value="ECO:0000266"/>
    <property type="project" value="RGD"/>
</dbReference>
<dbReference type="GO" id="GO:0030509">
    <property type="term" value="P:BMP signaling pathway"/>
    <property type="evidence" value="ECO:0000266"/>
    <property type="project" value="RGD"/>
</dbReference>
<dbReference type="GO" id="GO:0098868">
    <property type="term" value="P:bone growth"/>
    <property type="evidence" value="ECO:0000266"/>
    <property type="project" value="RGD"/>
</dbReference>
<dbReference type="GO" id="GO:0030282">
    <property type="term" value="P:bone mineralization"/>
    <property type="evidence" value="ECO:0000266"/>
    <property type="project" value="RGD"/>
</dbReference>
<dbReference type="GO" id="GO:0060349">
    <property type="term" value="P:bone morphogenesis"/>
    <property type="evidence" value="ECO:0000266"/>
    <property type="project" value="RGD"/>
</dbReference>
<dbReference type="GO" id="GO:0051216">
    <property type="term" value="P:cartilage development"/>
    <property type="evidence" value="ECO:0000266"/>
    <property type="project" value="RGD"/>
</dbReference>
<dbReference type="GO" id="GO:1990079">
    <property type="term" value="P:cartilage homeostasis"/>
    <property type="evidence" value="ECO:0000250"/>
    <property type="project" value="UniProtKB"/>
</dbReference>
<dbReference type="GO" id="GO:0090398">
    <property type="term" value="P:cellular senescence"/>
    <property type="evidence" value="ECO:0000266"/>
    <property type="project" value="RGD"/>
</dbReference>
<dbReference type="GO" id="GO:0002063">
    <property type="term" value="P:chondrocyte development"/>
    <property type="evidence" value="ECO:0000266"/>
    <property type="project" value="RGD"/>
</dbReference>
<dbReference type="GO" id="GO:0035988">
    <property type="term" value="P:chondrocyte proliferation"/>
    <property type="evidence" value="ECO:0000266"/>
    <property type="project" value="RGD"/>
</dbReference>
<dbReference type="GO" id="GO:0030199">
    <property type="term" value="P:collagen fibril organization"/>
    <property type="evidence" value="ECO:0000266"/>
    <property type="project" value="RGD"/>
</dbReference>
<dbReference type="GO" id="GO:0003416">
    <property type="term" value="P:endochondral bone growth"/>
    <property type="evidence" value="ECO:0000266"/>
    <property type="project" value="RGD"/>
</dbReference>
<dbReference type="GO" id="GO:0003417">
    <property type="term" value="P:growth plate cartilage development"/>
    <property type="evidence" value="ECO:0000266"/>
    <property type="project" value="RGD"/>
</dbReference>
<dbReference type="GO" id="GO:0060173">
    <property type="term" value="P:limb development"/>
    <property type="evidence" value="ECO:0000266"/>
    <property type="project" value="RGD"/>
</dbReference>
<dbReference type="GO" id="GO:0035264">
    <property type="term" value="P:multicellular organism growth"/>
    <property type="evidence" value="ECO:0000266"/>
    <property type="project" value="RGD"/>
</dbReference>
<dbReference type="GO" id="GO:0055001">
    <property type="term" value="P:muscle cell development"/>
    <property type="evidence" value="ECO:0000266"/>
    <property type="project" value="RGD"/>
</dbReference>
<dbReference type="GO" id="GO:0050881">
    <property type="term" value="P:musculoskeletal movement"/>
    <property type="evidence" value="ECO:0000266"/>
    <property type="project" value="RGD"/>
</dbReference>
<dbReference type="GO" id="GO:0043066">
    <property type="term" value="P:negative regulation of apoptotic process"/>
    <property type="evidence" value="ECO:0000266"/>
    <property type="project" value="RGD"/>
</dbReference>
<dbReference type="GO" id="GO:1900047">
    <property type="term" value="P:negative regulation of hemostasis"/>
    <property type="evidence" value="ECO:0000266"/>
    <property type="project" value="RGD"/>
</dbReference>
<dbReference type="GO" id="GO:0050905">
    <property type="term" value="P:neuromuscular process"/>
    <property type="evidence" value="ECO:0000266"/>
    <property type="project" value="RGD"/>
</dbReference>
<dbReference type="GO" id="GO:0001503">
    <property type="term" value="P:ossification"/>
    <property type="evidence" value="ECO:0000266"/>
    <property type="project" value="RGD"/>
</dbReference>
<dbReference type="GO" id="GO:0070527">
    <property type="term" value="P:platelet aggregation"/>
    <property type="evidence" value="ECO:0000266"/>
    <property type="project" value="RGD"/>
</dbReference>
<dbReference type="GO" id="GO:1902732">
    <property type="term" value="P:positive regulation of chondrocyte proliferation"/>
    <property type="evidence" value="ECO:0000266"/>
    <property type="project" value="RGD"/>
</dbReference>
<dbReference type="GO" id="GO:0051260">
    <property type="term" value="P:protein homooligomerization"/>
    <property type="evidence" value="ECO:0000250"/>
    <property type="project" value="UniProtKB"/>
</dbReference>
<dbReference type="GO" id="GO:0016485">
    <property type="term" value="P:protein processing"/>
    <property type="evidence" value="ECO:0000266"/>
    <property type="project" value="RGD"/>
</dbReference>
<dbReference type="GO" id="GO:0009306">
    <property type="term" value="P:protein secretion"/>
    <property type="evidence" value="ECO:0000266"/>
    <property type="project" value="RGD"/>
</dbReference>
<dbReference type="GO" id="GO:0030500">
    <property type="term" value="P:regulation of bone mineralization"/>
    <property type="evidence" value="ECO:0000266"/>
    <property type="project" value="RGD"/>
</dbReference>
<dbReference type="GO" id="GO:0010468">
    <property type="term" value="P:regulation of gene expression"/>
    <property type="evidence" value="ECO:0000266"/>
    <property type="project" value="RGD"/>
</dbReference>
<dbReference type="GO" id="GO:0006986">
    <property type="term" value="P:response to unfolded protein"/>
    <property type="evidence" value="ECO:0000266"/>
    <property type="project" value="RGD"/>
</dbReference>
<dbReference type="GO" id="GO:0001501">
    <property type="term" value="P:skeletal system development"/>
    <property type="evidence" value="ECO:0000266"/>
    <property type="project" value="RGD"/>
</dbReference>
<dbReference type="GO" id="GO:0043588">
    <property type="term" value="P:skin development"/>
    <property type="evidence" value="ECO:0000266"/>
    <property type="project" value="RGD"/>
</dbReference>
<dbReference type="GO" id="GO:0035989">
    <property type="term" value="P:tendon development"/>
    <property type="evidence" value="ECO:0000266"/>
    <property type="project" value="RGD"/>
</dbReference>
<dbReference type="GO" id="GO:0097084">
    <property type="term" value="P:vascular associated smooth muscle cell development"/>
    <property type="evidence" value="ECO:0000266"/>
    <property type="project" value="RGD"/>
</dbReference>
<dbReference type="GO" id="GO:0014829">
    <property type="term" value="P:vascular associated smooth muscle contraction"/>
    <property type="evidence" value="ECO:0000266"/>
    <property type="project" value="RGD"/>
</dbReference>
<dbReference type="CDD" id="cd00054">
    <property type="entry name" value="EGF_CA"/>
    <property type="match status" value="2"/>
</dbReference>
<dbReference type="CDD" id="cd16077">
    <property type="entry name" value="TSP-5cc"/>
    <property type="match status" value="1"/>
</dbReference>
<dbReference type="FunFam" id="2.10.25.10:FF:000346">
    <property type="entry name" value="Cartilage oligomeric matrix protein"/>
    <property type="match status" value="1"/>
</dbReference>
<dbReference type="FunFam" id="4.10.1080.10:FF:000004">
    <property type="entry name" value="Cartilage oligomeric matrix protein"/>
    <property type="match status" value="1"/>
</dbReference>
<dbReference type="FunFam" id="2.10.25.10:FF:000025">
    <property type="entry name" value="Thrombospondin 3"/>
    <property type="match status" value="1"/>
</dbReference>
<dbReference type="FunFam" id="2.10.25.10:FF:000027">
    <property type="entry name" value="Thrombospondin 3"/>
    <property type="match status" value="1"/>
</dbReference>
<dbReference type="FunFam" id="2.60.120.200:FF:000002">
    <property type="entry name" value="Thrombospondin 3"/>
    <property type="match status" value="1"/>
</dbReference>
<dbReference type="FunFam" id="4.10.1080.10:FF:000001">
    <property type="entry name" value="Thrombospondin 3"/>
    <property type="match status" value="1"/>
</dbReference>
<dbReference type="FunFam" id="2.10.25.10:FF:000170">
    <property type="entry name" value="thrombospondin-3 isoform X1"/>
    <property type="match status" value="1"/>
</dbReference>
<dbReference type="FunFam" id="1.20.5.10:FF:000001">
    <property type="entry name" value="thrombospondin-3 isoform X2"/>
    <property type="match status" value="1"/>
</dbReference>
<dbReference type="Gene3D" id="1.20.5.10">
    <property type="match status" value="1"/>
</dbReference>
<dbReference type="Gene3D" id="2.60.120.200">
    <property type="match status" value="1"/>
</dbReference>
<dbReference type="Gene3D" id="2.10.25.10">
    <property type="entry name" value="Laminin"/>
    <property type="match status" value="4"/>
</dbReference>
<dbReference type="Gene3D" id="4.10.1080.10">
    <property type="entry name" value="TSP type-3 repeat"/>
    <property type="match status" value="2"/>
</dbReference>
<dbReference type="InterPro" id="IPR013320">
    <property type="entry name" value="ConA-like_dom_sf"/>
</dbReference>
<dbReference type="InterPro" id="IPR001881">
    <property type="entry name" value="EGF-like_Ca-bd_dom"/>
</dbReference>
<dbReference type="InterPro" id="IPR000742">
    <property type="entry name" value="EGF-like_dom"/>
</dbReference>
<dbReference type="InterPro" id="IPR018097">
    <property type="entry name" value="EGF_Ca-bd_CS"/>
</dbReference>
<dbReference type="InterPro" id="IPR009030">
    <property type="entry name" value="Growth_fac_rcpt_cys_sf"/>
</dbReference>
<dbReference type="InterPro" id="IPR049883">
    <property type="entry name" value="NOTCH1_EGF-like"/>
</dbReference>
<dbReference type="InterPro" id="IPR003367">
    <property type="entry name" value="Thrombospondin_3-like_rpt"/>
</dbReference>
<dbReference type="InterPro" id="IPR017897">
    <property type="entry name" value="Thrombospondin_3_rpt"/>
</dbReference>
<dbReference type="InterPro" id="IPR008859">
    <property type="entry name" value="Thrombospondin_C"/>
</dbReference>
<dbReference type="InterPro" id="IPR039081">
    <property type="entry name" value="TSP-5_cc"/>
</dbReference>
<dbReference type="InterPro" id="IPR024665">
    <property type="entry name" value="TSP/COMP_coiled-coil"/>
</dbReference>
<dbReference type="InterPro" id="IPR046970">
    <property type="entry name" value="TSP/COMP_coiled-coil_sf"/>
</dbReference>
<dbReference type="InterPro" id="IPR028974">
    <property type="entry name" value="TSP_type-3_rpt"/>
</dbReference>
<dbReference type="PANTHER" id="PTHR10199:SF88">
    <property type="entry name" value="CARTILAGE OLIGOMERIC MATRIX PROTEIN"/>
    <property type="match status" value="1"/>
</dbReference>
<dbReference type="PANTHER" id="PTHR10199">
    <property type="entry name" value="THROMBOSPONDIN"/>
    <property type="match status" value="1"/>
</dbReference>
<dbReference type="Pfam" id="PF11598">
    <property type="entry name" value="COMP"/>
    <property type="match status" value="1"/>
</dbReference>
<dbReference type="Pfam" id="PF07645">
    <property type="entry name" value="EGF_CA"/>
    <property type="match status" value="2"/>
</dbReference>
<dbReference type="Pfam" id="PF02412">
    <property type="entry name" value="TSP_3"/>
    <property type="match status" value="6"/>
</dbReference>
<dbReference type="Pfam" id="PF05735">
    <property type="entry name" value="TSP_C"/>
    <property type="match status" value="1"/>
</dbReference>
<dbReference type="SMART" id="SM00181">
    <property type="entry name" value="EGF"/>
    <property type="match status" value="4"/>
</dbReference>
<dbReference type="SMART" id="SM00179">
    <property type="entry name" value="EGF_CA"/>
    <property type="match status" value="2"/>
</dbReference>
<dbReference type="SUPFAM" id="SSF58006">
    <property type="entry name" value="Assembly domain of cartilage oligomeric matrix protein"/>
    <property type="match status" value="1"/>
</dbReference>
<dbReference type="SUPFAM" id="SSF49899">
    <property type="entry name" value="Concanavalin A-like lectins/glucanases"/>
    <property type="match status" value="1"/>
</dbReference>
<dbReference type="SUPFAM" id="SSF57196">
    <property type="entry name" value="EGF/Laminin"/>
    <property type="match status" value="1"/>
</dbReference>
<dbReference type="SUPFAM" id="SSF57184">
    <property type="entry name" value="Growth factor receptor domain"/>
    <property type="match status" value="1"/>
</dbReference>
<dbReference type="SUPFAM" id="SSF103647">
    <property type="entry name" value="TSP type-3 repeat"/>
    <property type="match status" value="3"/>
</dbReference>
<dbReference type="PROSITE" id="PS01186">
    <property type="entry name" value="EGF_2"/>
    <property type="match status" value="1"/>
</dbReference>
<dbReference type="PROSITE" id="PS50026">
    <property type="entry name" value="EGF_3"/>
    <property type="match status" value="3"/>
</dbReference>
<dbReference type="PROSITE" id="PS01187">
    <property type="entry name" value="EGF_CA"/>
    <property type="match status" value="2"/>
</dbReference>
<dbReference type="PROSITE" id="PS51234">
    <property type="entry name" value="TSP3"/>
    <property type="match status" value="8"/>
</dbReference>
<dbReference type="PROSITE" id="PS51236">
    <property type="entry name" value="TSP_CTER"/>
    <property type="match status" value="1"/>
</dbReference>
<name>COMP_RAT</name>
<sequence length="755" mass="82664">MSPTACVLVLALAALRATGQGQIPLGGDLAPQMLRELQETNAALQDVRELLRHRVKEITFLKNTVMECDACGMQPARTPGLSVRPVALCAPGSCFPGVVCTETATGARCGPCPPGYTGNGSHCTDVNECNAHPCFPRVRCINTSPGFHCEACPPGFSGPTHEGVGLTFAKTNKQVCTDINECETGQHNCVPNSVCVNTRGSFQCGPCQPGFVGDQRSGCQRRGQHFCPDGSPSPCHEKADCILERDGSRSCVCAVGWAGNGLLCGRDTDLDGFPDEKLRCSERQCRKDNCVTVPNSGQEDVDRDRIGDACDPDADGDGVPNEQDNCPLVRNPDQRNSDKDKWGDACDNCRSQKNDDQKDTDRDGQGDACDDDIDGDRIRNVADNCPRVPNFDQSDSDGDGVGDACDNCPQKDNPDQRDVDHDFVGDACDSDQDQDGDGHQDSRDNCPTVPNSAQQDSDHDGKGDACDDDDDNDGVPDSRDNCRLVPNPGQEDNDRDGVGDACQGDFDADKVIDKIDVCPENAEVTLTDFRAFQTVVLDPEGDAQIDPNWVVLNQGMEIVQTMNSDPGLAVGYTAFNGVDFEGTFHVNTATDDDYAGFIFGYQDSSSFYVVMWKQMEQTYWQANPFRAVAEPGIQLKAVKSSTGPGEQLRNALWHTGDTASQVRLLWKDPRNVGWKDKTSYRWFLQHRPQVGYIRVRFYEGPELVADSNVVLDTAMRGGRLGVFCFSQENIIWANLRYRCNDTIPEDYERHRLRRA</sequence>
<gene>
    <name evidence="11" type="primary">Comp</name>
</gene>
<evidence type="ECO:0000250" key="1"/>
<evidence type="ECO:0000250" key="2">
    <source>
        <dbReference type="UniProtKB" id="P49747"/>
    </source>
</evidence>
<evidence type="ECO:0000250" key="3">
    <source>
        <dbReference type="UniProtKB" id="Q9R0G6"/>
    </source>
</evidence>
<evidence type="ECO:0000255" key="4"/>
<evidence type="ECO:0000255" key="5">
    <source>
        <dbReference type="PROSITE-ProRule" id="PRU00076"/>
    </source>
</evidence>
<evidence type="ECO:0000255" key="6">
    <source>
        <dbReference type="PROSITE-ProRule" id="PRU00635"/>
    </source>
</evidence>
<evidence type="ECO:0000256" key="7">
    <source>
        <dbReference type="SAM" id="MobiDB-lite"/>
    </source>
</evidence>
<evidence type="ECO:0000269" key="8">
    <source>
    </source>
</evidence>
<evidence type="ECO:0000269" key="9">
    <source>
    </source>
</evidence>
<evidence type="ECO:0000305" key="10"/>
<evidence type="ECO:0000312" key="11">
    <source>
        <dbReference type="RGD" id="2378"/>
    </source>
</evidence>
<evidence type="ECO:0007744" key="12">
    <source>
        <dbReference type="PDB" id="1FBM"/>
    </source>
</evidence>
<evidence type="ECO:0007744" key="13">
    <source>
        <dbReference type="PDB" id="1VDF"/>
    </source>
</evidence>
<evidence type="ECO:0007829" key="14">
    <source>
        <dbReference type="PDB" id="1VDF"/>
    </source>
</evidence>
<keyword id="KW-0002">3D-structure</keyword>
<keyword id="KW-0053">Apoptosis</keyword>
<keyword id="KW-0106">Calcium</keyword>
<keyword id="KW-0130">Cell adhesion</keyword>
<keyword id="KW-1015">Disulfide bond</keyword>
<keyword id="KW-0245">EGF-like domain</keyword>
<keyword id="KW-0272">Extracellular matrix</keyword>
<keyword id="KW-0325">Glycoprotein</keyword>
<keyword id="KW-0358">Heparin-binding</keyword>
<keyword id="KW-0597">Phosphoprotein</keyword>
<keyword id="KW-1185">Reference proteome</keyword>
<keyword id="KW-0677">Repeat</keyword>
<keyword id="KW-0964">Secreted</keyword>
<keyword id="KW-0732">Signal</keyword>
<reference key="1">
    <citation type="journal article" date="1992" name="J. Biol. Chem.">
        <title>COMP (cartilage oligomeric matrix protein) is structurally related to the thrombospondins.</title>
        <authorList>
            <person name="Oldberg A."/>
            <person name="Antonsson P."/>
            <person name="Lindblom K."/>
            <person name="Heinegaard D."/>
        </authorList>
    </citation>
    <scope>NUCLEOTIDE SEQUENCE [MRNA]</scope>
    <source>
        <tissue>Cartilage</tissue>
    </source>
</reference>
<reference key="2">
    <citation type="journal article" date="2010" name="Circ. Res.">
        <title>Cartilage oligomeric matrix protein maintains the contractile phenotype of vascular smooth muscle cells by interacting with alpha(7)beta(1) integrin.</title>
        <authorList>
            <person name="Wang L."/>
            <person name="Zheng J."/>
            <person name="Du Y."/>
            <person name="Huang Y."/>
            <person name="Li J."/>
            <person name="Liu B."/>
            <person name="Liu C.J."/>
            <person name="Zhu Y."/>
            <person name="Gao Y."/>
            <person name="Xu Q."/>
            <person name="Kong W."/>
            <person name="Wang X."/>
        </authorList>
    </citation>
    <scope>FUNCTION</scope>
    <scope>TISSUE SPECIFICITY</scope>
    <scope>INTERACTION WITH ITGA7</scope>
</reference>
<reference key="3">
    <citation type="journal article" date="1996" name="Science">
        <title>The crystal structure of a five-stranded coiled coil in COMP: a prototype ion channel?</title>
        <authorList>
            <person name="Malashkevich V.N."/>
            <person name="Kammerer R.A."/>
            <person name="Efimov V.P."/>
            <person name="Schulthess T."/>
            <person name="Engel J."/>
        </authorList>
    </citation>
    <scope>X-RAY CRYSTALLOGRAPHY (2.05 ANGSTROMS) OF 27-72</scope>
    <scope>DISULFIDE BONDS</scope>
</reference>
<organism>
    <name type="scientific">Rattus norvegicus</name>
    <name type="common">Rat</name>
    <dbReference type="NCBI Taxonomy" id="10116"/>
    <lineage>
        <taxon>Eukaryota</taxon>
        <taxon>Metazoa</taxon>
        <taxon>Chordata</taxon>
        <taxon>Craniata</taxon>
        <taxon>Vertebrata</taxon>
        <taxon>Euteleostomi</taxon>
        <taxon>Mammalia</taxon>
        <taxon>Eutheria</taxon>
        <taxon>Euarchontoglires</taxon>
        <taxon>Glires</taxon>
        <taxon>Rodentia</taxon>
        <taxon>Myomorpha</taxon>
        <taxon>Muroidea</taxon>
        <taxon>Muridae</taxon>
        <taxon>Murinae</taxon>
        <taxon>Rattus</taxon>
    </lineage>
</organism>
<accession>P35444</accession>
<comment type="function">
    <text evidence="2 8">Plays a role in the structural integrity of cartilage via its interaction with other extracellular matrix proteins such as the collagens and fibronectin. Can mediate the interaction of chondrocytes with the cartilage extracellular matrix through interaction with cell surface integrin receptors. Could play a role in the pathogenesis of osteoarthritis. Potent suppressor of apoptosis in both primary chondrocytes and transformed cells. Suppresses apoptosis by blocking the activation of caspase-3 and by inducing the IAP family of survival proteins (BIRC3, BIRC2, BIRC5 and XIAP) (By similarity). Essential for maintaining a vascular smooth muscle cells (VSMCs) contractile/differentiated phenotype under physiological and pathological stimuli. Maintains this phenotype of VSMCs by interacting with ITGA7 (PubMed:20019333).</text>
</comment>
<comment type="cofactor">
    <cofactor evidence="2">
        <name>Ca(2+)</name>
        <dbReference type="ChEBI" id="CHEBI:29108"/>
    </cofactor>
    <text evidence="2">Binds 11-14 calcium ions per subunit.</text>
</comment>
<comment type="subunit">
    <text evidence="2 8">Pentamer; disulfide-linked. Exists in a more compact conformation in the presence of calcium and shows a more extended conformation in the absence of calcium. Interacts with ITGB3, ITGA5 and FN1. Binding to FN1 requires the presence of divalent cations (Ca(2+), Mg(2+) or Mn(2+)). The greatest amount of binding is seen in the presence of Mn(2+). Interacts with MATN1, MATN3, MATN4 and ACAN. Binds heparin, heparan sulfate and chondroitin sulfate. EDTA dimishes significantly its binding to ACAN and abolishes its binding to MATN3, MATN4 and chondroitin sulfate. Interacts with collagen I, II and IX, and interaction with these collagens is dependent on the presence of zinc ions. Interacts with ADAMTS12 (By similarity). Interacts with ITGA7 (PubMed:20019333).</text>
</comment>
<comment type="subcellular location">
    <subcellularLocation>
        <location evidence="2">Secreted</location>
        <location evidence="2">Extracellular space</location>
        <location evidence="2">Extracellular matrix</location>
    </subcellularLocation>
</comment>
<comment type="domain">
    <text evidence="2">The cell attachment motif mediates the attachment to chondrocytes. It mediates the induction of both the IAP family of survival proteins and the antiapoptotic response.</text>
</comment>
<comment type="domain">
    <text evidence="2">The TSP C-terminal domain mediates interaction with FN1 and ACAN.</text>
</comment>
<comment type="domain">
    <text evidence="2">Each of the eight TSP type-3 repeats binds two calcium ions. The TSP C-terminal domain binds three calcium ions.</text>
</comment>
<comment type="PTM">
    <text evidence="2">Proteolytically cleaved by metalloproteases ADAMTS4 and ADAMTS1 with ADAMTS4 showing more potent activity.</text>
</comment>
<comment type="similarity">
    <text evidence="10">Belongs to the thrombospondin family.</text>
</comment>
<feature type="signal peptide" evidence="4">
    <location>
        <begin position="1"/>
        <end position="19"/>
    </location>
</feature>
<feature type="chain" id="PRO_0000035859" description="Cartilage oligomeric matrix protein">
    <location>
        <begin position="20"/>
        <end position="755"/>
    </location>
</feature>
<feature type="domain" description="EGF-like 1" evidence="5">
    <location>
        <begin position="85"/>
        <end position="124"/>
    </location>
</feature>
<feature type="domain" description="EGF-like 2; calcium-binding" evidence="5">
    <location>
        <begin position="125"/>
        <end position="177"/>
    </location>
</feature>
<feature type="domain" description="EGF-like 3; calcium-binding" evidence="5">
    <location>
        <begin position="178"/>
        <end position="220"/>
    </location>
</feature>
<feature type="domain" description="EGF-like 4" evidence="5">
    <location>
        <begin position="223"/>
        <end position="265"/>
    </location>
</feature>
<feature type="repeat" description="TSP type-3 1">
    <location>
        <begin position="266"/>
        <end position="298"/>
    </location>
</feature>
<feature type="repeat" description="TSP type-3 2">
    <location>
        <begin position="299"/>
        <end position="334"/>
    </location>
</feature>
<feature type="repeat" description="TSP type-3 3">
    <location>
        <begin position="335"/>
        <end position="357"/>
    </location>
</feature>
<feature type="repeat" description="TSP type-3 4">
    <location>
        <begin position="358"/>
        <end position="393"/>
    </location>
</feature>
<feature type="repeat" description="TSP type-3 5">
    <location>
        <begin position="394"/>
        <end position="416"/>
    </location>
</feature>
<feature type="repeat" description="TSP type-3 6">
    <location>
        <begin position="417"/>
        <end position="454"/>
    </location>
</feature>
<feature type="repeat" description="TSP type-3 7">
    <location>
        <begin position="455"/>
        <end position="490"/>
    </location>
</feature>
<feature type="repeat" description="TSP type-3 8">
    <location>
        <begin position="491"/>
        <end position="526"/>
    </location>
</feature>
<feature type="domain" description="TSP C-terminal" evidence="6">
    <location>
        <begin position="530"/>
        <end position="744"/>
    </location>
</feature>
<feature type="region of interest" description="COMP N-terminal">
    <location>
        <begin position="21"/>
        <end position="84"/>
    </location>
</feature>
<feature type="region of interest" description="Disordered" evidence="7">
    <location>
        <begin position="295"/>
        <end position="501"/>
    </location>
</feature>
<feature type="region of interest" description="Mediates cell survival and induction of the IAP family of survival proteins" evidence="1">
    <location>
        <begin position="525"/>
        <end position="755"/>
    </location>
</feature>
<feature type="compositionally biased region" description="Basic and acidic residues" evidence="7">
    <location>
        <begin position="332"/>
        <end position="344"/>
    </location>
</feature>
<feature type="compositionally biased region" description="Basic and acidic residues" evidence="7">
    <location>
        <begin position="350"/>
        <end position="365"/>
    </location>
</feature>
<feature type="compositionally biased region" description="Basic and acidic residues" evidence="7">
    <location>
        <begin position="412"/>
        <end position="424"/>
    </location>
</feature>
<feature type="compositionally biased region" description="Basic and acidic residues" evidence="7">
    <location>
        <begin position="456"/>
        <end position="465"/>
    </location>
</feature>
<feature type="modified residue" description="Phosphoserine" evidence="3">
    <location>
        <position position="394"/>
    </location>
</feature>
<feature type="glycosylation site" description="N-linked (GlcNAc...) asparagine" evidence="4">
    <location>
        <position position="119"/>
    </location>
</feature>
<feature type="glycosylation site" description="N-linked (GlcNAc...) asparagine" evidence="4">
    <location>
        <position position="740"/>
    </location>
</feature>
<feature type="disulfide bond" description="Interchain (with C-71)" evidence="9 12 13">
    <location>
        <position position="68"/>
    </location>
</feature>
<feature type="disulfide bond" description="Interchain (with C-68)" evidence="9 12 13">
    <location>
        <position position="71"/>
    </location>
</feature>
<feature type="disulfide bond" evidence="5">
    <location>
        <begin position="89"/>
        <end position="100"/>
    </location>
</feature>
<feature type="disulfide bond" evidence="5">
    <location>
        <begin position="94"/>
        <end position="109"/>
    </location>
</feature>
<feature type="disulfide bond" evidence="5">
    <location>
        <begin position="112"/>
        <end position="123"/>
    </location>
</feature>
<feature type="disulfide bond" evidence="5">
    <location>
        <begin position="129"/>
        <end position="140"/>
    </location>
</feature>
<feature type="disulfide bond" evidence="5">
    <location>
        <begin position="134"/>
        <end position="149"/>
    </location>
</feature>
<feature type="disulfide bond" evidence="5">
    <location>
        <begin position="152"/>
        <end position="176"/>
    </location>
</feature>
<feature type="disulfide bond" evidence="5">
    <location>
        <begin position="182"/>
        <end position="195"/>
    </location>
</feature>
<feature type="disulfide bond" evidence="5">
    <location>
        <begin position="189"/>
        <end position="204"/>
    </location>
</feature>
<feature type="disulfide bond" evidence="5">
    <location>
        <begin position="207"/>
        <end position="219"/>
    </location>
</feature>
<feature type="disulfide bond" evidence="5">
    <location>
        <begin position="227"/>
        <end position="241"/>
    </location>
</feature>
<feature type="disulfide bond" evidence="5">
    <location>
        <begin position="235"/>
        <end position="251"/>
    </location>
</feature>
<feature type="disulfide bond" evidence="5">
    <location>
        <begin position="253"/>
        <end position="264"/>
    </location>
</feature>
<feature type="disulfide bond" evidence="5">
    <location>
        <begin position="280"/>
        <end position="285"/>
    </location>
</feature>
<feature type="disulfide bond" evidence="5">
    <location>
        <begin position="290"/>
        <end position="310"/>
    </location>
</feature>
<feature type="disulfide bond" evidence="5">
    <location>
        <begin position="326"/>
        <end position="346"/>
    </location>
</feature>
<feature type="disulfide bond" evidence="5">
    <location>
        <begin position="349"/>
        <end position="369"/>
    </location>
</feature>
<feature type="disulfide bond" evidence="5">
    <location>
        <begin position="385"/>
        <end position="405"/>
    </location>
</feature>
<feature type="disulfide bond" evidence="5">
    <location>
        <begin position="408"/>
        <end position="428"/>
    </location>
</feature>
<feature type="disulfide bond" evidence="5">
    <location>
        <begin position="446"/>
        <end position="466"/>
    </location>
</feature>
<feature type="disulfide bond" evidence="5">
    <location>
        <begin position="482"/>
        <end position="502"/>
    </location>
</feature>
<feature type="disulfide bond" evidence="5">
    <location>
        <begin position="518"/>
        <end position="739"/>
    </location>
</feature>
<feature type="helix" evidence="14">
    <location>
        <begin position="30"/>
        <end position="66"/>
    </location>
</feature>
<proteinExistence type="evidence at protein level"/>